<protein>
    <recommendedName>
        <fullName evidence="1">Chorismate synthase 2</fullName>
        <shortName evidence="1">CS 2</shortName>
        <ecNumber evidence="1">4.2.3.5</ecNumber>
    </recommendedName>
    <alternativeName>
        <fullName evidence="1">5-enolpyruvylshikimate-3-phosphate phospholyase 2</fullName>
    </alternativeName>
</protein>
<gene>
    <name evidence="1" type="primary">aroC2</name>
    <name type="ordered locus">BCE_2997</name>
</gene>
<evidence type="ECO:0000255" key="1">
    <source>
        <dbReference type="HAMAP-Rule" id="MF_00300"/>
    </source>
</evidence>
<proteinExistence type="inferred from homology"/>
<reference key="1">
    <citation type="journal article" date="2004" name="Nucleic Acids Res.">
        <title>The genome sequence of Bacillus cereus ATCC 10987 reveals metabolic adaptations and a large plasmid related to Bacillus anthracis pXO1.</title>
        <authorList>
            <person name="Rasko D.A."/>
            <person name="Ravel J."/>
            <person name="Oekstad O.A."/>
            <person name="Helgason E."/>
            <person name="Cer R.Z."/>
            <person name="Jiang L."/>
            <person name="Shores K.A."/>
            <person name="Fouts D.E."/>
            <person name="Tourasse N.J."/>
            <person name="Angiuoli S.V."/>
            <person name="Kolonay J.F."/>
            <person name="Nelson W.C."/>
            <person name="Kolstoe A.-B."/>
            <person name="Fraser C.M."/>
            <person name="Read T.D."/>
        </authorList>
    </citation>
    <scope>NUCLEOTIDE SEQUENCE [LARGE SCALE GENOMIC DNA]</scope>
    <source>
        <strain>ATCC 10987 / NRS 248</strain>
    </source>
</reference>
<accession>Q736A4</accession>
<sequence length="390" mass="42370">MRYITAGESHGPQLTVILEGVPAGLTLAAEHINKELLRRQKGHGRGRRMQIETDTVEIVSGVRHGVTLGSPITLIVKNDDFKHWTKVMGAEPISEKESKDMKRTITKPRPGHADLNGAIKYGHRDIRNVLERSSARETTVRVAAGAVAKQILKELGVEIAGHVLEIGGVKAKHISNLSIEEIQTITENSPVRCLDKEVEQEMMNAIDHAKSSGDSIGGIVEVIAEGMPIGVGSYVHYDRKLDAKLAGAIMSINAFKGAEIGVGFEAARQPGSKVHDEILWDEEQGYTRKTNNAGGLEGGMTTGMPIVVRGVMKPIPTLYKPLASVDIDTKEAFQASIERSDSCAVPAAGVVAESVVAWELAHALVEQFGKDRMELIQQNITQHNKYAKEF</sequence>
<comment type="function">
    <text evidence="1">Catalyzes the anti-1,4-elimination of the C-3 phosphate and the C-6 proR hydrogen from 5-enolpyruvylshikimate-3-phosphate (EPSP) to yield chorismate, which is the branch point compound that serves as the starting substrate for the three terminal pathways of aromatic amino acid biosynthesis. This reaction introduces a second double bond into the aromatic ring system.</text>
</comment>
<comment type="catalytic activity">
    <reaction evidence="1">
        <text>5-O-(1-carboxyvinyl)-3-phosphoshikimate = chorismate + phosphate</text>
        <dbReference type="Rhea" id="RHEA:21020"/>
        <dbReference type="ChEBI" id="CHEBI:29748"/>
        <dbReference type="ChEBI" id="CHEBI:43474"/>
        <dbReference type="ChEBI" id="CHEBI:57701"/>
        <dbReference type="EC" id="4.2.3.5"/>
    </reaction>
</comment>
<comment type="cofactor">
    <cofactor evidence="1">
        <name>FMNH2</name>
        <dbReference type="ChEBI" id="CHEBI:57618"/>
    </cofactor>
    <text evidence="1">Reduced FMN (FMNH(2)).</text>
</comment>
<comment type="pathway">
    <text evidence="1">Metabolic intermediate biosynthesis; chorismate biosynthesis; chorismate from D-erythrose 4-phosphate and phosphoenolpyruvate: step 7/7.</text>
</comment>
<comment type="subunit">
    <text evidence="1">Homotetramer.</text>
</comment>
<comment type="similarity">
    <text evidence="1">Belongs to the chorismate synthase family.</text>
</comment>
<dbReference type="EC" id="4.2.3.5" evidence="1"/>
<dbReference type="EMBL" id="AE017194">
    <property type="protein sequence ID" value="AAS41908.1"/>
    <property type="molecule type" value="Genomic_DNA"/>
</dbReference>
<dbReference type="SMR" id="Q736A4"/>
<dbReference type="KEGG" id="bca:BCE_2997"/>
<dbReference type="HOGENOM" id="CLU_034547_2_0_9"/>
<dbReference type="UniPathway" id="UPA00053">
    <property type="reaction ID" value="UER00090"/>
</dbReference>
<dbReference type="Proteomes" id="UP000002527">
    <property type="component" value="Chromosome"/>
</dbReference>
<dbReference type="GO" id="GO:0005829">
    <property type="term" value="C:cytosol"/>
    <property type="evidence" value="ECO:0007669"/>
    <property type="project" value="TreeGrafter"/>
</dbReference>
<dbReference type="GO" id="GO:0004107">
    <property type="term" value="F:chorismate synthase activity"/>
    <property type="evidence" value="ECO:0007669"/>
    <property type="project" value="UniProtKB-UniRule"/>
</dbReference>
<dbReference type="GO" id="GO:0010181">
    <property type="term" value="F:FMN binding"/>
    <property type="evidence" value="ECO:0007669"/>
    <property type="project" value="TreeGrafter"/>
</dbReference>
<dbReference type="GO" id="GO:0008652">
    <property type="term" value="P:amino acid biosynthetic process"/>
    <property type="evidence" value="ECO:0007669"/>
    <property type="project" value="UniProtKB-KW"/>
</dbReference>
<dbReference type="GO" id="GO:0009073">
    <property type="term" value="P:aromatic amino acid family biosynthetic process"/>
    <property type="evidence" value="ECO:0007669"/>
    <property type="project" value="UniProtKB-KW"/>
</dbReference>
<dbReference type="GO" id="GO:0009423">
    <property type="term" value="P:chorismate biosynthetic process"/>
    <property type="evidence" value="ECO:0007669"/>
    <property type="project" value="UniProtKB-UniRule"/>
</dbReference>
<dbReference type="CDD" id="cd07304">
    <property type="entry name" value="Chorismate_synthase"/>
    <property type="match status" value="1"/>
</dbReference>
<dbReference type="FunFam" id="3.60.150.10:FF:000002">
    <property type="entry name" value="Chorismate synthase"/>
    <property type="match status" value="1"/>
</dbReference>
<dbReference type="Gene3D" id="3.60.150.10">
    <property type="entry name" value="Chorismate synthase AroC"/>
    <property type="match status" value="1"/>
</dbReference>
<dbReference type="HAMAP" id="MF_00300">
    <property type="entry name" value="Chorismate_synth"/>
    <property type="match status" value="1"/>
</dbReference>
<dbReference type="InterPro" id="IPR000453">
    <property type="entry name" value="Chorismate_synth"/>
</dbReference>
<dbReference type="InterPro" id="IPR035904">
    <property type="entry name" value="Chorismate_synth_AroC_sf"/>
</dbReference>
<dbReference type="InterPro" id="IPR020541">
    <property type="entry name" value="Chorismate_synthase_CS"/>
</dbReference>
<dbReference type="NCBIfam" id="TIGR00033">
    <property type="entry name" value="aroC"/>
    <property type="match status" value="1"/>
</dbReference>
<dbReference type="NCBIfam" id="NF003793">
    <property type="entry name" value="PRK05382.1"/>
    <property type="match status" value="1"/>
</dbReference>
<dbReference type="NCBIfam" id="NF009113">
    <property type="entry name" value="PRK12463.1"/>
    <property type="match status" value="1"/>
</dbReference>
<dbReference type="PANTHER" id="PTHR21085">
    <property type="entry name" value="CHORISMATE SYNTHASE"/>
    <property type="match status" value="1"/>
</dbReference>
<dbReference type="PANTHER" id="PTHR21085:SF0">
    <property type="entry name" value="CHORISMATE SYNTHASE"/>
    <property type="match status" value="1"/>
</dbReference>
<dbReference type="Pfam" id="PF01264">
    <property type="entry name" value="Chorismate_synt"/>
    <property type="match status" value="1"/>
</dbReference>
<dbReference type="PIRSF" id="PIRSF001456">
    <property type="entry name" value="Chorismate_synth"/>
    <property type="match status" value="1"/>
</dbReference>
<dbReference type="SUPFAM" id="SSF103263">
    <property type="entry name" value="Chorismate synthase, AroC"/>
    <property type="match status" value="1"/>
</dbReference>
<dbReference type="PROSITE" id="PS00787">
    <property type="entry name" value="CHORISMATE_SYNTHASE_1"/>
    <property type="match status" value="1"/>
</dbReference>
<dbReference type="PROSITE" id="PS00788">
    <property type="entry name" value="CHORISMATE_SYNTHASE_2"/>
    <property type="match status" value="1"/>
</dbReference>
<dbReference type="PROSITE" id="PS00789">
    <property type="entry name" value="CHORISMATE_SYNTHASE_3"/>
    <property type="match status" value="1"/>
</dbReference>
<keyword id="KW-0028">Amino-acid biosynthesis</keyword>
<keyword id="KW-0057">Aromatic amino acid biosynthesis</keyword>
<keyword id="KW-0274">FAD</keyword>
<keyword id="KW-0285">Flavoprotein</keyword>
<keyword id="KW-0288">FMN</keyword>
<keyword id="KW-0456">Lyase</keyword>
<keyword id="KW-0521">NADP</keyword>
<name>AROC2_BACC1</name>
<organism>
    <name type="scientific">Bacillus cereus (strain ATCC 10987 / NRS 248)</name>
    <dbReference type="NCBI Taxonomy" id="222523"/>
    <lineage>
        <taxon>Bacteria</taxon>
        <taxon>Bacillati</taxon>
        <taxon>Bacillota</taxon>
        <taxon>Bacilli</taxon>
        <taxon>Bacillales</taxon>
        <taxon>Bacillaceae</taxon>
        <taxon>Bacillus</taxon>
        <taxon>Bacillus cereus group</taxon>
    </lineage>
</organism>
<feature type="chain" id="PRO_0000140542" description="Chorismate synthase 2">
    <location>
        <begin position="1"/>
        <end position="390"/>
    </location>
</feature>
<feature type="binding site" evidence="1">
    <location>
        <position position="39"/>
    </location>
    <ligand>
        <name>NADP(+)</name>
        <dbReference type="ChEBI" id="CHEBI:58349"/>
    </ligand>
</feature>
<feature type="binding site" evidence="1">
    <location>
        <position position="45"/>
    </location>
    <ligand>
        <name>NADP(+)</name>
        <dbReference type="ChEBI" id="CHEBI:58349"/>
    </ligand>
</feature>
<feature type="binding site" evidence="1">
    <location>
        <begin position="132"/>
        <end position="134"/>
    </location>
    <ligand>
        <name>FMN</name>
        <dbReference type="ChEBI" id="CHEBI:58210"/>
    </ligand>
</feature>
<feature type="binding site" evidence="1">
    <location>
        <begin position="253"/>
        <end position="254"/>
    </location>
    <ligand>
        <name>FMN</name>
        <dbReference type="ChEBI" id="CHEBI:58210"/>
    </ligand>
</feature>
<feature type="binding site" evidence="1">
    <location>
        <position position="298"/>
    </location>
    <ligand>
        <name>FMN</name>
        <dbReference type="ChEBI" id="CHEBI:58210"/>
    </ligand>
</feature>
<feature type="binding site" evidence="1">
    <location>
        <begin position="313"/>
        <end position="317"/>
    </location>
    <ligand>
        <name>FMN</name>
        <dbReference type="ChEBI" id="CHEBI:58210"/>
    </ligand>
</feature>
<feature type="binding site" evidence="1">
    <location>
        <position position="339"/>
    </location>
    <ligand>
        <name>FMN</name>
        <dbReference type="ChEBI" id="CHEBI:58210"/>
    </ligand>
</feature>